<gene>
    <name type="primary">traT</name>
</gene>
<comment type="function">
    <text>Responsible for preventing unproductive conjugation between bacteria carrying like plasmids.</text>
</comment>
<comment type="subcellular location">
    <subcellularLocation>
        <location>Cell outer membrane</location>
        <topology>Lipid-anchor</topology>
    </subcellularLocation>
</comment>
<comment type="similarity">
    <text evidence="2">Belongs to the TraT lipoprotein family.</text>
</comment>
<name>TRAT3_ECOLX</name>
<sequence length="245" mass="25978">MKHNVKLMAMTAVLSSVLVLSGCGAMSTAIKKRNLEVKTQMSETIWLEPSSQKTVYLQIKNTSDKDMSGLQAKVTKAVQDKGYTITSSPDSAHYWIQANVLKADKMDLRTAQGFLSQGYEGAIAGAALGAGITGYNSSSAGATLGVGLAAGLVGMAADAMVEDINYTMVTDIQISEKTTASVQTDNVAALKQGTSGYKVQTSTQTGNQHKYQTRIVSSANKVNLKFEEAKPVLEDQLAKSVANIL</sequence>
<reference key="1">
    <citation type="journal article" date="1986" name="J. Bacteriol.">
        <title>Nucleotide sequence of the surface exclusion genes traS and traT from the IncF0 lac plasmid pED208.</title>
        <authorList>
            <person name="Finlay B.B."/>
            <person name="Paranchych W."/>
        </authorList>
    </citation>
    <scope>NUCLEOTIDE SEQUENCE [GENOMIC DNA]</scope>
</reference>
<keyword id="KW-0998">Cell outer membrane</keyword>
<keyword id="KW-0184">Conjugation</keyword>
<keyword id="KW-0449">Lipoprotein</keyword>
<keyword id="KW-0472">Membrane</keyword>
<keyword id="KW-0564">Palmitate</keyword>
<keyword id="KW-0614">Plasmid</keyword>
<keyword id="KW-0732">Signal</keyword>
<accession>P13980</accession>
<proteinExistence type="inferred from homology"/>
<organism>
    <name type="scientific">Escherichia coli</name>
    <dbReference type="NCBI Taxonomy" id="562"/>
    <lineage>
        <taxon>Bacteria</taxon>
        <taxon>Pseudomonadati</taxon>
        <taxon>Pseudomonadota</taxon>
        <taxon>Gammaproteobacteria</taxon>
        <taxon>Enterobacterales</taxon>
        <taxon>Enterobacteriaceae</taxon>
        <taxon>Escherichia</taxon>
    </lineage>
</organism>
<evidence type="ECO:0000255" key="1">
    <source>
        <dbReference type="PROSITE-ProRule" id="PRU00303"/>
    </source>
</evidence>
<evidence type="ECO:0000305" key="2"/>
<protein>
    <recommendedName>
        <fullName>TraT complement resistance protein</fullName>
    </recommendedName>
</protein>
<feature type="signal peptide" evidence="1">
    <location>
        <begin position="1"/>
        <end position="22"/>
    </location>
</feature>
<feature type="chain" id="PRO_0000018206" description="TraT complement resistance protein">
    <location>
        <begin position="23"/>
        <end position="245"/>
    </location>
</feature>
<feature type="lipid moiety-binding region" description="N-palmitoyl cysteine" evidence="1">
    <location>
        <position position="23"/>
    </location>
</feature>
<feature type="lipid moiety-binding region" description="S-diacylglycerol cysteine" evidence="1">
    <location>
        <position position="23"/>
    </location>
</feature>
<geneLocation type="plasmid">
    <name>IncFV pED208</name>
</geneLocation>
<dbReference type="EMBL" id="M13465">
    <property type="protein sequence ID" value="AAA88375.1"/>
    <property type="molecule type" value="Genomic_DNA"/>
</dbReference>
<dbReference type="PIR" id="C29835">
    <property type="entry name" value="C29835"/>
</dbReference>
<dbReference type="RefSeq" id="WP_023197467.1">
    <property type="nucleotide sequence ID" value="NZ_CAJVFL010000030.1"/>
</dbReference>
<dbReference type="SMR" id="P13980"/>
<dbReference type="GO" id="GO:0009279">
    <property type="term" value="C:cell outer membrane"/>
    <property type="evidence" value="ECO:0007669"/>
    <property type="project" value="UniProtKB-SubCell"/>
</dbReference>
<dbReference type="InterPro" id="IPR008874">
    <property type="entry name" value="TraT_complement-R"/>
</dbReference>
<dbReference type="NCBIfam" id="NF010291">
    <property type="entry name" value="PRK13731.1"/>
    <property type="match status" value="1"/>
</dbReference>
<dbReference type="Pfam" id="PF05818">
    <property type="entry name" value="TraT"/>
    <property type="match status" value="1"/>
</dbReference>
<dbReference type="PIRSF" id="PIRSF002859">
    <property type="entry name" value="Lipo_traT"/>
    <property type="match status" value="1"/>
</dbReference>
<dbReference type="PROSITE" id="PS51257">
    <property type="entry name" value="PROKAR_LIPOPROTEIN"/>
    <property type="match status" value="1"/>
</dbReference>